<feature type="chain" id="PRO_1000087317" description="Protein translocase subunit SecA">
    <location>
        <begin position="1"/>
        <end position="901"/>
    </location>
</feature>
<feature type="region of interest" description="Disordered" evidence="2">
    <location>
        <begin position="859"/>
        <end position="901"/>
    </location>
</feature>
<feature type="compositionally biased region" description="Basic residues" evidence="2">
    <location>
        <begin position="891"/>
        <end position="901"/>
    </location>
</feature>
<feature type="binding site" evidence="1">
    <location>
        <position position="87"/>
    </location>
    <ligand>
        <name>ATP</name>
        <dbReference type="ChEBI" id="CHEBI:30616"/>
    </ligand>
</feature>
<feature type="binding site" evidence="1">
    <location>
        <begin position="105"/>
        <end position="109"/>
    </location>
    <ligand>
        <name>ATP</name>
        <dbReference type="ChEBI" id="CHEBI:30616"/>
    </ligand>
</feature>
<feature type="binding site" evidence="1">
    <location>
        <position position="512"/>
    </location>
    <ligand>
        <name>ATP</name>
        <dbReference type="ChEBI" id="CHEBI:30616"/>
    </ligand>
</feature>
<feature type="binding site" evidence="1">
    <location>
        <position position="885"/>
    </location>
    <ligand>
        <name>Zn(2+)</name>
        <dbReference type="ChEBI" id="CHEBI:29105"/>
    </ligand>
</feature>
<feature type="binding site" evidence="1">
    <location>
        <position position="887"/>
    </location>
    <ligand>
        <name>Zn(2+)</name>
        <dbReference type="ChEBI" id="CHEBI:29105"/>
    </ligand>
</feature>
<feature type="binding site" evidence="1">
    <location>
        <position position="896"/>
    </location>
    <ligand>
        <name>Zn(2+)</name>
        <dbReference type="ChEBI" id="CHEBI:29105"/>
    </ligand>
</feature>
<feature type="binding site" evidence="1">
    <location>
        <position position="897"/>
    </location>
    <ligand>
        <name>Zn(2+)</name>
        <dbReference type="ChEBI" id="CHEBI:29105"/>
    </ligand>
</feature>
<protein>
    <recommendedName>
        <fullName evidence="1">Protein translocase subunit SecA</fullName>
        <ecNumber evidence="1">7.4.2.8</ecNumber>
    </recommendedName>
</protein>
<evidence type="ECO:0000255" key="1">
    <source>
        <dbReference type="HAMAP-Rule" id="MF_01382"/>
    </source>
</evidence>
<evidence type="ECO:0000256" key="2">
    <source>
        <dbReference type="SAM" id="MobiDB-lite"/>
    </source>
</evidence>
<organism>
    <name type="scientific">Escherichia coli (strain ATCC 8739 / DSM 1576 / NBRC 3972 / NCIMB 8545 / WDCM 00012 / Crooks)</name>
    <dbReference type="NCBI Taxonomy" id="481805"/>
    <lineage>
        <taxon>Bacteria</taxon>
        <taxon>Pseudomonadati</taxon>
        <taxon>Pseudomonadota</taxon>
        <taxon>Gammaproteobacteria</taxon>
        <taxon>Enterobacterales</taxon>
        <taxon>Enterobacteriaceae</taxon>
        <taxon>Escherichia</taxon>
    </lineage>
</organism>
<keyword id="KW-0067">ATP-binding</keyword>
<keyword id="KW-0997">Cell inner membrane</keyword>
<keyword id="KW-1003">Cell membrane</keyword>
<keyword id="KW-0963">Cytoplasm</keyword>
<keyword id="KW-0472">Membrane</keyword>
<keyword id="KW-0479">Metal-binding</keyword>
<keyword id="KW-0547">Nucleotide-binding</keyword>
<keyword id="KW-0653">Protein transport</keyword>
<keyword id="KW-1278">Translocase</keyword>
<keyword id="KW-0811">Translocation</keyword>
<keyword id="KW-0813">Transport</keyword>
<keyword id="KW-0862">Zinc</keyword>
<reference key="1">
    <citation type="submission" date="2008-02" db="EMBL/GenBank/DDBJ databases">
        <title>Complete sequence of Escherichia coli C str. ATCC 8739.</title>
        <authorList>
            <person name="Copeland A."/>
            <person name="Lucas S."/>
            <person name="Lapidus A."/>
            <person name="Glavina del Rio T."/>
            <person name="Dalin E."/>
            <person name="Tice H."/>
            <person name="Bruce D."/>
            <person name="Goodwin L."/>
            <person name="Pitluck S."/>
            <person name="Kiss H."/>
            <person name="Brettin T."/>
            <person name="Detter J.C."/>
            <person name="Han C."/>
            <person name="Kuske C.R."/>
            <person name="Schmutz J."/>
            <person name="Larimer F."/>
            <person name="Land M."/>
            <person name="Hauser L."/>
            <person name="Kyrpides N."/>
            <person name="Mikhailova N."/>
            <person name="Ingram L."/>
            <person name="Richardson P."/>
        </authorList>
    </citation>
    <scope>NUCLEOTIDE SEQUENCE [LARGE SCALE GENOMIC DNA]</scope>
    <source>
        <strain>ATCC 8739 / DSM 1576 / NBRC 3972 / NCIMB 8545 / WDCM 00012 / Crooks</strain>
    </source>
</reference>
<accession>B1IR80</accession>
<comment type="function">
    <text evidence="1">Part of the Sec protein translocase complex. Interacts with the SecYEG preprotein conducting channel. Has a central role in coupling the hydrolysis of ATP to the transfer of proteins into and across the cell membrane, serving both as a receptor for the preprotein-SecB complex and as an ATP-driven molecular motor driving the stepwise translocation of polypeptide chains across the membrane.</text>
</comment>
<comment type="catalytic activity">
    <reaction evidence="1">
        <text>ATP + H2O + cellular proteinSide 1 = ADP + phosphate + cellular proteinSide 2.</text>
        <dbReference type="EC" id="7.4.2.8"/>
    </reaction>
</comment>
<comment type="cofactor">
    <cofactor evidence="1">
        <name>Zn(2+)</name>
        <dbReference type="ChEBI" id="CHEBI:29105"/>
    </cofactor>
    <text evidence="1">May bind 1 zinc ion per subunit.</text>
</comment>
<comment type="subunit">
    <text evidence="1">Monomer and homodimer. Part of the essential Sec protein translocation apparatus which comprises SecA, SecYEG and auxiliary proteins SecDF-YajC and YidC.</text>
</comment>
<comment type="subcellular location">
    <subcellularLocation>
        <location evidence="1">Cell inner membrane</location>
        <topology evidence="1">Peripheral membrane protein</topology>
        <orientation evidence="1">Cytoplasmic side</orientation>
    </subcellularLocation>
    <subcellularLocation>
        <location evidence="1">Cytoplasm</location>
    </subcellularLocation>
    <text evidence="1">Distribution is 50-50.</text>
</comment>
<comment type="induction">
    <text evidence="1">Repressed under conditions of excess protein secretion capacity and derepressed when protein secretion becomes limiting. This is regulated by SecM.</text>
</comment>
<comment type="similarity">
    <text evidence="1">Belongs to the SecA family.</text>
</comment>
<dbReference type="EC" id="7.4.2.8" evidence="1"/>
<dbReference type="EMBL" id="CP000946">
    <property type="protein sequence ID" value="ACA79173.1"/>
    <property type="molecule type" value="Genomic_DNA"/>
</dbReference>
<dbReference type="RefSeq" id="WP_000905789.1">
    <property type="nucleotide sequence ID" value="NZ_MTFT01000035.1"/>
</dbReference>
<dbReference type="SMR" id="B1IR80"/>
<dbReference type="GeneID" id="93777336"/>
<dbReference type="KEGG" id="ecl:EcolC_3559"/>
<dbReference type="HOGENOM" id="CLU_005314_3_0_6"/>
<dbReference type="GO" id="GO:0031522">
    <property type="term" value="C:cell envelope Sec protein transport complex"/>
    <property type="evidence" value="ECO:0007669"/>
    <property type="project" value="TreeGrafter"/>
</dbReference>
<dbReference type="GO" id="GO:0005829">
    <property type="term" value="C:cytosol"/>
    <property type="evidence" value="ECO:0007669"/>
    <property type="project" value="TreeGrafter"/>
</dbReference>
<dbReference type="GO" id="GO:0005886">
    <property type="term" value="C:plasma membrane"/>
    <property type="evidence" value="ECO:0007669"/>
    <property type="project" value="UniProtKB-SubCell"/>
</dbReference>
<dbReference type="GO" id="GO:0005524">
    <property type="term" value="F:ATP binding"/>
    <property type="evidence" value="ECO:0007669"/>
    <property type="project" value="UniProtKB-UniRule"/>
</dbReference>
<dbReference type="GO" id="GO:0046872">
    <property type="term" value="F:metal ion binding"/>
    <property type="evidence" value="ECO:0007669"/>
    <property type="project" value="UniProtKB-KW"/>
</dbReference>
<dbReference type="GO" id="GO:0008564">
    <property type="term" value="F:protein-exporting ATPase activity"/>
    <property type="evidence" value="ECO:0007669"/>
    <property type="project" value="UniProtKB-EC"/>
</dbReference>
<dbReference type="GO" id="GO:0065002">
    <property type="term" value="P:intracellular protein transmembrane transport"/>
    <property type="evidence" value="ECO:0007669"/>
    <property type="project" value="UniProtKB-UniRule"/>
</dbReference>
<dbReference type="GO" id="GO:0017038">
    <property type="term" value="P:protein import"/>
    <property type="evidence" value="ECO:0007669"/>
    <property type="project" value="InterPro"/>
</dbReference>
<dbReference type="GO" id="GO:0006605">
    <property type="term" value="P:protein targeting"/>
    <property type="evidence" value="ECO:0007669"/>
    <property type="project" value="UniProtKB-UniRule"/>
</dbReference>
<dbReference type="GO" id="GO:0043952">
    <property type="term" value="P:protein transport by the Sec complex"/>
    <property type="evidence" value="ECO:0007669"/>
    <property type="project" value="TreeGrafter"/>
</dbReference>
<dbReference type="CDD" id="cd17928">
    <property type="entry name" value="DEXDc_SecA"/>
    <property type="match status" value="1"/>
</dbReference>
<dbReference type="CDD" id="cd18803">
    <property type="entry name" value="SF2_C_secA"/>
    <property type="match status" value="1"/>
</dbReference>
<dbReference type="FunFam" id="1.10.3060.10:FF:000001">
    <property type="entry name" value="Preprotein translocase subunit SecA"/>
    <property type="match status" value="1"/>
</dbReference>
<dbReference type="FunFam" id="3.40.50.300:FF:000081">
    <property type="entry name" value="Preprotein translocase subunit SecA"/>
    <property type="match status" value="1"/>
</dbReference>
<dbReference type="FunFam" id="3.40.50.300:FF:000113">
    <property type="entry name" value="Preprotein translocase subunit SecA"/>
    <property type="match status" value="1"/>
</dbReference>
<dbReference type="FunFam" id="3.90.1440.10:FF:000001">
    <property type="entry name" value="Preprotein translocase subunit SecA"/>
    <property type="match status" value="1"/>
</dbReference>
<dbReference type="Gene3D" id="1.10.3060.10">
    <property type="entry name" value="Helical scaffold and wing domains of SecA"/>
    <property type="match status" value="1"/>
</dbReference>
<dbReference type="Gene3D" id="3.40.50.300">
    <property type="entry name" value="P-loop containing nucleotide triphosphate hydrolases"/>
    <property type="match status" value="2"/>
</dbReference>
<dbReference type="Gene3D" id="3.90.1440.10">
    <property type="entry name" value="SecA, preprotein cross-linking domain"/>
    <property type="match status" value="1"/>
</dbReference>
<dbReference type="HAMAP" id="MF_01382">
    <property type="entry name" value="SecA"/>
    <property type="match status" value="1"/>
</dbReference>
<dbReference type="InterPro" id="IPR014001">
    <property type="entry name" value="Helicase_ATP-bd"/>
</dbReference>
<dbReference type="InterPro" id="IPR001650">
    <property type="entry name" value="Helicase_C-like"/>
</dbReference>
<dbReference type="InterPro" id="IPR027417">
    <property type="entry name" value="P-loop_NTPase"/>
</dbReference>
<dbReference type="InterPro" id="IPR004027">
    <property type="entry name" value="SEC_C_motif"/>
</dbReference>
<dbReference type="InterPro" id="IPR000185">
    <property type="entry name" value="SecA"/>
</dbReference>
<dbReference type="InterPro" id="IPR020937">
    <property type="entry name" value="SecA_CS"/>
</dbReference>
<dbReference type="InterPro" id="IPR011115">
    <property type="entry name" value="SecA_DEAD"/>
</dbReference>
<dbReference type="InterPro" id="IPR014018">
    <property type="entry name" value="SecA_motor_DEAD"/>
</dbReference>
<dbReference type="InterPro" id="IPR011130">
    <property type="entry name" value="SecA_preprotein_X-link_dom"/>
</dbReference>
<dbReference type="InterPro" id="IPR044722">
    <property type="entry name" value="SecA_SF2_C"/>
</dbReference>
<dbReference type="InterPro" id="IPR011116">
    <property type="entry name" value="SecA_Wing/Scaffold"/>
</dbReference>
<dbReference type="InterPro" id="IPR036266">
    <property type="entry name" value="SecA_Wing/Scaffold_sf"/>
</dbReference>
<dbReference type="InterPro" id="IPR036670">
    <property type="entry name" value="SecA_X-link_sf"/>
</dbReference>
<dbReference type="NCBIfam" id="NF009538">
    <property type="entry name" value="PRK12904.1"/>
    <property type="match status" value="1"/>
</dbReference>
<dbReference type="NCBIfam" id="TIGR00963">
    <property type="entry name" value="secA"/>
    <property type="match status" value="1"/>
</dbReference>
<dbReference type="PANTHER" id="PTHR30612:SF0">
    <property type="entry name" value="CHLOROPLAST PROTEIN-TRANSPORTING ATPASE"/>
    <property type="match status" value="1"/>
</dbReference>
<dbReference type="PANTHER" id="PTHR30612">
    <property type="entry name" value="SECA INNER MEMBRANE COMPONENT OF SEC PROTEIN SECRETION SYSTEM"/>
    <property type="match status" value="1"/>
</dbReference>
<dbReference type="Pfam" id="PF21090">
    <property type="entry name" value="P-loop_SecA"/>
    <property type="match status" value="1"/>
</dbReference>
<dbReference type="Pfam" id="PF02810">
    <property type="entry name" value="SEC-C"/>
    <property type="match status" value="1"/>
</dbReference>
<dbReference type="Pfam" id="PF07517">
    <property type="entry name" value="SecA_DEAD"/>
    <property type="match status" value="1"/>
</dbReference>
<dbReference type="Pfam" id="PF01043">
    <property type="entry name" value="SecA_PP_bind"/>
    <property type="match status" value="1"/>
</dbReference>
<dbReference type="Pfam" id="PF07516">
    <property type="entry name" value="SecA_SW"/>
    <property type="match status" value="1"/>
</dbReference>
<dbReference type="PRINTS" id="PR00906">
    <property type="entry name" value="SECA"/>
</dbReference>
<dbReference type="SMART" id="SM00957">
    <property type="entry name" value="SecA_DEAD"/>
    <property type="match status" value="1"/>
</dbReference>
<dbReference type="SMART" id="SM00958">
    <property type="entry name" value="SecA_PP_bind"/>
    <property type="match status" value="1"/>
</dbReference>
<dbReference type="SUPFAM" id="SSF81886">
    <property type="entry name" value="Helical scaffold and wing domains of SecA"/>
    <property type="match status" value="1"/>
</dbReference>
<dbReference type="SUPFAM" id="SSF52540">
    <property type="entry name" value="P-loop containing nucleoside triphosphate hydrolases"/>
    <property type="match status" value="2"/>
</dbReference>
<dbReference type="SUPFAM" id="SSF81767">
    <property type="entry name" value="Pre-protein crosslinking domain of SecA"/>
    <property type="match status" value="1"/>
</dbReference>
<dbReference type="PROSITE" id="PS01312">
    <property type="entry name" value="SECA"/>
    <property type="match status" value="1"/>
</dbReference>
<dbReference type="PROSITE" id="PS51196">
    <property type="entry name" value="SECA_MOTOR_DEAD"/>
    <property type="match status" value="1"/>
</dbReference>
<sequence>MLIKLLTKVFGSRNDRTLRRMRKVVNIINAMEPEMEKLSDEELKGKTAEFRARLEKGEVLENLIPEAFAVVREASKRVFGMRHFDVQLLGGMVLNERCIAEMRTGEGKTLTATLPAYLNALTGKGVHVVTVNDYLAQRDAENNRPLFEFLGLTVGINLPGMPAPAKREAYAADITYGTNNEYGFDYLRDNMAFSPEERVQRKLHYALVDEVDSILIDEARTPLIISGPAEDSSEMYKRVNKIIPHLIRQEKEDSETFQGEGHFSVDEKSRQVNLTERGLVLIEELLVKEGIMDEGESLYSPANIMLMHHVTAALRAHALFTRDVDYIVKDGEVIIVDEHTGRTMQGRRWSDGLHQAVEAKEGVQIQNENQTLASITFQNYFRLYEKLAGMTGTADTEAFEFSSIYKLDTVVVPTNRPMIRKDLPDLVYMTEAEKIQAIIEDIKERTAKGQPVLVGTISIEKSELVSNELTKAGIKHNVLNAKFHANEAAIVAQAGYPAAVTIATNMAGRGTDIVLGGSWQAEVAALENPTAEQIEKIKADWQVRHDAVLEAGGLHIIGTERHESRRIDNQLRGRSGRQGDAGSSRFYLSMEDALMRIFASDRVSGMMRKLGMKPGEAIEHPWVTKAIANAQRKVESRNFDIRKQLLEYDDVANDQRRAIYSQRNELLDVSDVSETINSIREDVFKATIDAYIPPQSLEEMWDIPGLQERLKNDFDLDLPIAEWLDKEPELHEETLRERILAQSIEVYQRKEEVVGAEMMRHFEKGVMLQTLDSLWKEHLAAMDYLRQGIHLRGYAQKDPKQEYKRESFSMFAAMLESLKYEVISTLSKVQVRMPEEVEELEQQRRMEAERLAQMQQLSHQDDDSAAAAALAAQTGERKVGRNDPCPCGSGKKYKQCHGRLQ</sequence>
<gene>
    <name evidence="1" type="primary">secA</name>
    <name type="ordered locus">EcolC_3559</name>
</gene>
<name>SECA_ECOLC</name>
<proteinExistence type="inferred from homology"/>